<proteinExistence type="evidence at protein level"/>
<evidence type="ECO:0000255" key="1"/>
<evidence type="ECO:0000255" key="2">
    <source>
        <dbReference type="PROSITE-ProRule" id="PRU00107"/>
    </source>
</evidence>
<evidence type="ECO:0000255" key="3">
    <source>
        <dbReference type="PROSITE-ProRule" id="PRU00169"/>
    </source>
</evidence>
<evidence type="ECO:0000269" key="4">
    <source>
    </source>
</evidence>
<evidence type="ECO:0000305" key="5"/>
<feature type="chain" id="PRO_0000310535" description="Autoinducer 1 sensor kinase/phosphatase LuxN">
    <location>
        <begin position="1"/>
        <end position="849"/>
    </location>
</feature>
<feature type="transmembrane region" description="Helical" evidence="1">
    <location>
        <begin position="9"/>
        <end position="29"/>
    </location>
</feature>
<feature type="transmembrane region" description="Helical" evidence="1">
    <location>
        <begin position="41"/>
        <end position="61"/>
    </location>
</feature>
<feature type="transmembrane region" description="Helical" evidence="1">
    <location>
        <begin position="160"/>
        <end position="180"/>
    </location>
</feature>
<feature type="transmembrane region" description="Helical" evidence="1">
    <location>
        <begin position="196"/>
        <end position="216"/>
    </location>
</feature>
<feature type="transmembrane region" description="Helical" evidence="1">
    <location>
        <begin position="220"/>
        <end position="242"/>
    </location>
</feature>
<feature type="transmembrane region" description="Helical" evidence="1">
    <location>
        <begin position="251"/>
        <end position="275"/>
    </location>
</feature>
<feature type="transmembrane region" description="Helical" evidence="1">
    <location>
        <begin position="283"/>
        <end position="301"/>
    </location>
</feature>
<feature type="domain" description="Histidine kinase" evidence="2">
    <location>
        <begin position="468"/>
        <end position="683"/>
    </location>
</feature>
<feature type="domain" description="Response regulatory" evidence="3">
    <location>
        <begin position="722"/>
        <end position="835"/>
    </location>
</feature>
<feature type="modified residue" description="Phosphohistidine; by autocatalysis" evidence="2 4">
    <location>
        <position position="471"/>
    </location>
</feature>
<feature type="modified residue" description="4-aspartylphosphate" evidence="3 4">
    <location>
        <position position="771"/>
    </location>
</feature>
<feature type="mutagenesis site" description="Almost no light produced. Constitutive luminescence; when associated with Q-471. Wild-type level of light; when associated with A-771." evidence="4">
    <original>L</original>
    <variation>R</variation>
    <location>
        <position position="166"/>
    </location>
</feature>
<feature type="mutagenesis site" description="No effect." evidence="4">
    <original>S</original>
    <variation>E</variation>
    <location>
        <position position="468"/>
    </location>
</feature>
<feature type="mutagenesis site" description="Constitutive luminescence." evidence="4">
    <original>I</original>
    <variation>G</variation>
    <location>
        <position position="469"/>
    </location>
</feature>
<feature type="mutagenesis site" description="Constitutive luminescence." evidence="4">
    <original>H</original>
    <variation>A</variation>
    <variation>F</variation>
    <variation>G</variation>
    <variation>I</variation>
    <variation>Q</variation>
    <variation>R</variation>
    <variation>S</variation>
    <location>
        <position position="471"/>
    </location>
</feature>
<feature type="mutagenesis site" description="Constitutive luminescence; when associated with R-166." evidence="4">
    <original>H</original>
    <variation>Q</variation>
    <location>
        <position position="471"/>
    </location>
</feature>
<feature type="mutagenesis site" description="Constitutive luminescence." evidence="4">
    <original>N</original>
    <variation>R</variation>
    <location>
        <position position="475"/>
    </location>
</feature>
<feature type="mutagenesis site" description="LuxN null phenotype. Wild-type level of light; when associated with R-166." evidence="4">
    <original>D</original>
    <variation>A</variation>
    <location>
        <position position="771"/>
    </location>
</feature>
<gene>
    <name type="primary">luxN</name>
    <name type="ordered locus">VIBHAR_02766</name>
</gene>
<organism>
    <name type="scientific">Vibrio campbellii (strain ATCC BAA-1116)</name>
    <dbReference type="NCBI Taxonomy" id="2902295"/>
    <lineage>
        <taxon>Bacteria</taxon>
        <taxon>Pseudomonadati</taxon>
        <taxon>Pseudomonadota</taxon>
        <taxon>Gammaproteobacteria</taxon>
        <taxon>Vibrionales</taxon>
        <taxon>Vibrionaceae</taxon>
        <taxon>Vibrio</taxon>
    </lineage>
</organism>
<reference key="1">
    <citation type="submission" date="2007-08" db="EMBL/GenBank/DDBJ databases">
        <authorList>
            <consortium name="The Vibrio harveyi Genome Sequencing Project"/>
            <person name="Bassler B."/>
            <person name="Clifton S.W."/>
            <person name="Fulton L."/>
            <person name="Delehaunty K."/>
            <person name="Fronick C."/>
            <person name="Harrison M."/>
            <person name="Markivic C."/>
            <person name="Fulton R."/>
            <person name="Tin-Wollam A.-M."/>
            <person name="Shah N."/>
            <person name="Pepin K."/>
            <person name="Nash W."/>
            <person name="Thiruvilangam P."/>
            <person name="Bhonagiri V."/>
            <person name="Waters C."/>
            <person name="Tu K.C."/>
            <person name="Irgon J."/>
            <person name="Wilson R.K."/>
        </authorList>
    </citation>
    <scope>NUCLEOTIDE SEQUENCE [LARGE SCALE GENOMIC DNA]</scope>
    <source>
        <strain>ATCC BAA-1116 / BB120</strain>
    </source>
</reference>
<reference key="2">
    <citation type="journal article" date="2000" name="Mol. Microbiol.">
        <title>A genetic analysis of the functions of LuxN: a two-component hybrid sensor kinase that regulates quorum sensing in Vibrio harveyi.</title>
        <authorList>
            <person name="Freeman J.A."/>
            <person name="Lilley B.N."/>
            <person name="Bassler B.L."/>
        </authorList>
    </citation>
    <scope>FUNCTION</scope>
    <scope>PHOSPHORYLATION AT HIS-471 AND ASP-771</scope>
    <scope>MUTAGENESIS OF LEU-166; SER-468; ILE-469; HIS-471; ASN-475 AND ASP-771</scope>
</reference>
<comment type="function">
    <text evidence="4">At low cell density, in the absence of AI-1 (autoinducer 1), LuxN has a kinase activity and autophosphorylates on His-471. The phosphoryl group is then transferred on Asp-771 of the response regulator domain. The phosphoryl group is transferred to LuxU, and ultimately to LuxO. At high cell density, in the presence of AI-1, the kinase activity is inactivated, and the response regulator domain has a phosphatase activity. LuxN phosphatase acts on itself. As LuxU could function to establish an equilibrium between the aspartyl-phosphate of LuxN and the aspartyl-phosphate of LuxO, LuxU transfers phosphate from LuxO to LuxN and finally phosphate is drained from the system.</text>
</comment>
<comment type="catalytic activity">
    <reaction>
        <text>ATP + protein L-histidine = ADP + protein N-phospho-L-histidine.</text>
        <dbReference type="EC" id="2.7.13.3"/>
    </reaction>
</comment>
<comment type="activity regulation">
    <text>The phosphatase activity is constitutive and the kinase activity is regulated by the presence or absence of AI-1. At low cell density the kinase activity overrides the phosphatase activity.</text>
</comment>
<comment type="subcellular location">
    <subcellularLocation>
        <location evidence="5">Cell inner membrane</location>
        <topology evidence="5">Multi-pass membrane protein</topology>
    </subcellularLocation>
</comment>
<name>LUXN_VIBC1</name>
<accession>A7MRY4</accession>
<accession>P54301</accession>
<keyword id="KW-0067">ATP-binding</keyword>
<keyword id="KW-0997">Cell inner membrane</keyword>
<keyword id="KW-1003">Cell membrane</keyword>
<keyword id="KW-0378">Hydrolase</keyword>
<keyword id="KW-0418">Kinase</keyword>
<keyword id="KW-0472">Membrane</keyword>
<keyword id="KW-0547">Nucleotide-binding</keyword>
<keyword id="KW-0597">Phosphoprotein</keyword>
<keyword id="KW-0904">Protein phosphatase</keyword>
<keyword id="KW-0808">Transferase</keyword>
<keyword id="KW-0812">Transmembrane</keyword>
<keyword id="KW-1133">Transmembrane helix</keyword>
<keyword id="KW-0902">Two-component regulatory system</keyword>
<protein>
    <recommendedName>
        <fullName>Autoinducer 1 sensor kinase/phosphatase LuxN</fullName>
        <ecNumber>2.7.13.3</ecNumber>
        <ecNumber>3.1.3.-</ecNumber>
    </recommendedName>
</protein>
<dbReference type="EC" id="2.7.13.3"/>
<dbReference type="EC" id="3.1.3.-"/>
<dbReference type="EMBL" id="CP000789">
    <property type="protein sequence ID" value="ABU71720.1"/>
    <property type="molecule type" value="Genomic_DNA"/>
</dbReference>
<dbReference type="RefSeq" id="WP_012128348.1">
    <property type="nucleotide sequence ID" value="NC_009783.1"/>
</dbReference>
<dbReference type="SMR" id="A7MRY4"/>
<dbReference type="iPTMnet" id="A7MRY4"/>
<dbReference type="KEGG" id="vha:VIBHAR_02766"/>
<dbReference type="PATRIC" id="fig|338187.25.peg.3410"/>
<dbReference type="Proteomes" id="UP000008152">
    <property type="component" value="Chromosome I"/>
</dbReference>
<dbReference type="GO" id="GO:0005886">
    <property type="term" value="C:plasma membrane"/>
    <property type="evidence" value="ECO:0007669"/>
    <property type="project" value="UniProtKB-SubCell"/>
</dbReference>
<dbReference type="GO" id="GO:0005524">
    <property type="term" value="F:ATP binding"/>
    <property type="evidence" value="ECO:0007669"/>
    <property type="project" value="UniProtKB-KW"/>
</dbReference>
<dbReference type="GO" id="GO:0004721">
    <property type="term" value="F:phosphoprotein phosphatase activity"/>
    <property type="evidence" value="ECO:0007669"/>
    <property type="project" value="UniProtKB-KW"/>
</dbReference>
<dbReference type="GO" id="GO:0000155">
    <property type="term" value="F:phosphorelay sensor kinase activity"/>
    <property type="evidence" value="ECO:0007669"/>
    <property type="project" value="InterPro"/>
</dbReference>
<dbReference type="CDD" id="cd00075">
    <property type="entry name" value="HATPase"/>
    <property type="match status" value="1"/>
</dbReference>
<dbReference type="CDD" id="cd00082">
    <property type="entry name" value="HisKA"/>
    <property type="match status" value="1"/>
</dbReference>
<dbReference type="CDD" id="cd17546">
    <property type="entry name" value="REC_hyHK_CKI1_RcsC-like"/>
    <property type="match status" value="1"/>
</dbReference>
<dbReference type="FunFam" id="3.30.565.10:FF:000168">
    <property type="entry name" value="Autoinducer 1 sensor kinase/phosphatase LuxN"/>
    <property type="match status" value="1"/>
</dbReference>
<dbReference type="Gene3D" id="1.10.287.130">
    <property type="match status" value="1"/>
</dbReference>
<dbReference type="Gene3D" id="3.40.50.2300">
    <property type="match status" value="1"/>
</dbReference>
<dbReference type="Gene3D" id="3.30.565.10">
    <property type="entry name" value="Histidine kinase-like ATPase, C-terminal domain"/>
    <property type="match status" value="1"/>
</dbReference>
<dbReference type="InterPro" id="IPR011006">
    <property type="entry name" value="CheY-like_superfamily"/>
</dbReference>
<dbReference type="InterPro" id="IPR036890">
    <property type="entry name" value="HATPase_C_sf"/>
</dbReference>
<dbReference type="InterPro" id="IPR005467">
    <property type="entry name" value="His_kinase_dom"/>
</dbReference>
<dbReference type="InterPro" id="IPR003661">
    <property type="entry name" value="HisK_dim/P_dom"/>
</dbReference>
<dbReference type="InterPro" id="IPR036097">
    <property type="entry name" value="HisK_dim/P_sf"/>
</dbReference>
<dbReference type="InterPro" id="IPR004358">
    <property type="entry name" value="Sig_transdc_His_kin-like_C"/>
</dbReference>
<dbReference type="InterPro" id="IPR001789">
    <property type="entry name" value="Sig_transdc_resp-reg_receiver"/>
</dbReference>
<dbReference type="NCBIfam" id="NF041945">
    <property type="entry name" value="LuxN_Vibrio"/>
    <property type="match status" value="1"/>
</dbReference>
<dbReference type="PANTHER" id="PTHR43547:SF2">
    <property type="entry name" value="HYBRID SIGNAL TRANSDUCTION HISTIDINE KINASE C"/>
    <property type="match status" value="1"/>
</dbReference>
<dbReference type="PANTHER" id="PTHR43547">
    <property type="entry name" value="TWO-COMPONENT HISTIDINE KINASE"/>
    <property type="match status" value="1"/>
</dbReference>
<dbReference type="Pfam" id="PF02518">
    <property type="entry name" value="HATPase_c"/>
    <property type="match status" value="1"/>
</dbReference>
<dbReference type="Pfam" id="PF00072">
    <property type="entry name" value="Response_reg"/>
    <property type="match status" value="1"/>
</dbReference>
<dbReference type="PRINTS" id="PR00344">
    <property type="entry name" value="BCTRLSENSOR"/>
</dbReference>
<dbReference type="SMART" id="SM00387">
    <property type="entry name" value="HATPase_c"/>
    <property type="match status" value="1"/>
</dbReference>
<dbReference type="SMART" id="SM00388">
    <property type="entry name" value="HisKA"/>
    <property type="match status" value="1"/>
</dbReference>
<dbReference type="SMART" id="SM00448">
    <property type="entry name" value="REC"/>
    <property type="match status" value="1"/>
</dbReference>
<dbReference type="SUPFAM" id="SSF55874">
    <property type="entry name" value="ATPase domain of HSP90 chaperone/DNA topoisomerase II/histidine kinase"/>
    <property type="match status" value="1"/>
</dbReference>
<dbReference type="SUPFAM" id="SSF52172">
    <property type="entry name" value="CheY-like"/>
    <property type="match status" value="1"/>
</dbReference>
<dbReference type="SUPFAM" id="SSF47384">
    <property type="entry name" value="Homodimeric domain of signal transducing histidine kinase"/>
    <property type="match status" value="1"/>
</dbReference>
<dbReference type="PROSITE" id="PS50109">
    <property type="entry name" value="HIS_KIN"/>
    <property type="match status" value="1"/>
</dbReference>
<dbReference type="PROSITE" id="PS50110">
    <property type="entry name" value="RESPONSE_REGULATORY"/>
    <property type="match status" value="1"/>
</dbReference>
<sequence>MFDFSLEAIVYAKAITLLATVAVVMMWLFYYCYRLKQKNEVIFGTHHAAYIAYSVCIIAWISSNAYFHTDLLPELGASAGMFMAKFANLASFFAFAFAYYFSCQLAAEQRKGKVHRWQQGIFVSLTVYSLFINLRPGLTVEHVDIVGPSQFIIEFGPHTSYFFIGLVSFVVLTLVNLVAMRTNSSKLTLAKTNYMIAGILVFMLSTAVIHLGMTYFMGDFSLTWLPPALSISEMLFVGYALLTSRFYSVKYIAYLALSVLLVCAIFVLPLGAIFIPLTESNQWLIAIPICALIGITWQLLYKKTSRYASFLIYGDKKTPVQQILSLEEDFKLSIDDAMRRLGKLLQIPNDKLRLVTSNYNETFYEEYLSSNRSVLVFDELSEELEYKVSAKRSMKALYDKMSSNNTALVMPLFGQGKSVTHLLISPHKSNNQMFSNEEISAVQTLLTRVQSTIEADRRIRQSRALANSIAHEMRNPLAQVQLQFEALKQHIENHAPVEQITLDIENGQAAIQRGRQLIDIILREVSDSSPEHEPIAMTSIHKAVDQAVSHYGFENEKIIERIRLPQHTDFVAKLNETLFNFVIFNLIRNAIYYFDSYPDSQIEISTKTGPYENTLIFRDTGPGIDETISHKIFDDFFSYQKSGGSGLGLGYCQRVMRSFGGRIECKSKLGTFTEFHLYFPVVPNAPKADTLRTPYFNDWKQNKRSNEHKVAPNVQINNQSPTVLIVDDKEVQRALVQMYLNQLGVNSLQANNGENAVEVFKANHVDLILMDVQMPVMNGFDASQRIKELSPQTPIVALSGESGERELDMINKLMDGRLEKPTTLNALRHVLGNWLNKNTASSACEAERE</sequence>